<sequence>MGQKINPLGFRLGTTQSHHSFWFAQPRNFSTGLQEDEKIRNSIKNYIQKNRRISSGFEGIARIRIKKRIDLIQVIIHIGFPNLLIEGRTRGIEELQINVQKEFHFSNRRLKIAITRVEKPYEQANILAEYIALQLKNRVSFRKAMKKAIELTEQTDTKGIQVQIAGRIDGKEIARVEWIREGRVPLQTIRAKIDHCSYTIRTIYGVLGIKIWIFVD</sequence>
<geneLocation type="chloroplast"/>
<name>RR3_DIOEL</name>
<comment type="subunit">
    <text evidence="1">Part of the 30S ribosomal subunit.</text>
</comment>
<comment type="subcellular location">
    <subcellularLocation>
        <location>Plastid</location>
        <location>Chloroplast</location>
    </subcellularLocation>
</comment>
<comment type="similarity">
    <text evidence="2">Belongs to the universal ribosomal protein uS3 family.</text>
</comment>
<evidence type="ECO:0000250" key="1"/>
<evidence type="ECO:0000305" key="2"/>
<protein>
    <recommendedName>
        <fullName evidence="2">Small ribosomal subunit protein uS3c</fullName>
    </recommendedName>
    <alternativeName>
        <fullName>30S ribosomal protein S3, chloroplastic</fullName>
    </alternativeName>
</protein>
<feature type="chain" id="PRO_0000323326" description="Small ribosomal subunit protein uS3c">
    <location>
        <begin position="1"/>
        <end position="216"/>
    </location>
</feature>
<feature type="domain" description="KH type-2">
    <location>
        <begin position="43"/>
        <end position="118"/>
    </location>
</feature>
<proteinExistence type="inferred from homology"/>
<reference key="1">
    <citation type="journal article" date="2007" name="Mol. Phylogenet. Evol.">
        <title>Phylogenetic and evolutionary implications of complete chloroplast genome sequences of four early-diverging angiosperms: Buxus (Buxaceae), Chloranthus (Chloranthaceae), Dioscorea (Dioscoreaceae), and Illicium (Schisandraceae).</title>
        <authorList>
            <person name="Hansen D.R."/>
            <person name="Dastidar S.G."/>
            <person name="Cai Z."/>
            <person name="Penaflor C."/>
            <person name="Kuehl J.V."/>
            <person name="Boore J.L."/>
            <person name="Jansen R.K."/>
        </authorList>
    </citation>
    <scope>NUCLEOTIDE SEQUENCE [LARGE SCALE GENOMIC DNA]</scope>
</reference>
<dbReference type="EMBL" id="EF380353">
    <property type="protein sequence ID" value="ABR01468.1"/>
    <property type="molecule type" value="Genomic_DNA"/>
</dbReference>
<dbReference type="RefSeq" id="YP_001294391.1">
    <property type="nucleotide sequence ID" value="NC_009601.1"/>
</dbReference>
<dbReference type="SMR" id="A6MMP6"/>
<dbReference type="GeneID" id="5236581"/>
<dbReference type="GO" id="GO:0009507">
    <property type="term" value="C:chloroplast"/>
    <property type="evidence" value="ECO:0007669"/>
    <property type="project" value="UniProtKB-SubCell"/>
</dbReference>
<dbReference type="GO" id="GO:0022627">
    <property type="term" value="C:cytosolic small ribosomal subunit"/>
    <property type="evidence" value="ECO:0007669"/>
    <property type="project" value="TreeGrafter"/>
</dbReference>
<dbReference type="GO" id="GO:0019843">
    <property type="term" value="F:rRNA binding"/>
    <property type="evidence" value="ECO:0007669"/>
    <property type="project" value="UniProtKB-KW"/>
</dbReference>
<dbReference type="GO" id="GO:0003735">
    <property type="term" value="F:structural constituent of ribosome"/>
    <property type="evidence" value="ECO:0007669"/>
    <property type="project" value="InterPro"/>
</dbReference>
<dbReference type="GO" id="GO:0006412">
    <property type="term" value="P:translation"/>
    <property type="evidence" value="ECO:0007669"/>
    <property type="project" value="UniProtKB-UniRule"/>
</dbReference>
<dbReference type="CDD" id="cd02412">
    <property type="entry name" value="KH-II_30S_S3"/>
    <property type="match status" value="1"/>
</dbReference>
<dbReference type="FunFam" id="3.30.1140.32:FF:000003">
    <property type="entry name" value="30S ribosomal protein S3, chloroplastic"/>
    <property type="match status" value="1"/>
</dbReference>
<dbReference type="FunFam" id="3.30.300.20:FF:000008">
    <property type="entry name" value="30S ribosomal protein S3, chloroplastic"/>
    <property type="match status" value="1"/>
</dbReference>
<dbReference type="Gene3D" id="3.30.300.20">
    <property type="match status" value="1"/>
</dbReference>
<dbReference type="Gene3D" id="3.30.1140.32">
    <property type="entry name" value="Ribosomal protein S3, C-terminal domain"/>
    <property type="match status" value="1"/>
</dbReference>
<dbReference type="HAMAP" id="MF_01309_B">
    <property type="entry name" value="Ribosomal_uS3_B"/>
    <property type="match status" value="1"/>
</dbReference>
<dbReference type="InterPro" id="IPR015946">
    <property type="entry name" value="KH_dom-like_a/b"/>
</dbReference>
<dbReference type="InterPro" id="IPR009019">
    <property type="entry name" value="KH_sf_prok-type"/>
</dbReference>
<dbReference type="InterPro" id="IPR036419">
    <property type="entry name" value="Ribosomal_S3_C_sf"/>
</dbReference>
<dbReference type="InterPro" id="IPR005704">
    <property type="entry name" value="Ribosomal_uS3_bac-typ"/>
</dbReference>
<dbReference type="InterPro" id="IPR001351">
    <property type="entry name" value="Ribosomal_uS3_C"/>
</dbReference>
<dbReference type="InterPro" id="IPR018280">
    <property type="entry name" value="Ribosomal_uS3_CS"/>
</dbReference>
<dbReference type="NCBIfam" id="TIGR01009">
    <property type="entry name" value="rpsC_bact"/>
    <property type="match status" value="1"/>
</dbReference>
<dbReference type="PANTHER" id="PTHR11760">
    <property type="entry name" value="30S/40S RIBOSOMAL PROTEIN S3"/>
    <property type="match status" value="1"/>
</dbReference>
<dbReference type="PANTHER" id="PTHR11760:SF19">
    <property type="entry name" value="SMALL RIBOSOMAL SUBUNIT PROTEIN US3C"/>
    <property type="match status" value="1"/>
</dbReference>
<dbReference type="Pfam" id="PF00189">
    <property type="entry name" value="Ribosomal_S3_C"/>
    <property type="match status" value="1"/>
</dbReference>
<dbReference type="SUPFAM" id="SSF54814">
    <property type="entry name" value="Prokaryotic type KH domain (KH-domain type II)"/>
    <property type="match status" value="1"/>
</dbReference>
<dbReference type="SUPFAM" id="SSF54821">
    <property type="entry name" value="Ribosomal protein S3 C-terminal domain"/>
    <property type="match status" value="1"/>
</dbReference>
<dbReference type="PROSITE" id="PS00548">
    <property type="entry name" value="RIBOSOMAL_S3"/>
    <property type="match status" value="1"/>
</dbReference>
<accession>A6MMP6</accession>
<gene>
    <name type="primary">rps3</name>
</gene>
<organism>
    <name type="scientific">Dioscorea elephantipes</name>
    <name type="common">Elephant's foot yam</name>
    <name type="synonym">Testudinaria elephantipes</name>
    <dbReference type="NCBI Taxonomy" id="145284"/>
    <lineage>
        <taxon>Eukaryota</taxon>
        <taxon>Viridiplantae</taxon>
        <taxon>Streptophyta</taxon>
        <taxon>Embryophyta</taxon>
        <taxon>Tracheophyta</taxon>
        <taxon>Spermatophyta</taxon>
        <taxon>Magnoliopsida</taxon>
        <taxon>Liliopsida</taxon>
        <taxon>Dioscoreales</taxon>
        <taxon>Dioscoreaceae</taxon>
        <taxon>Dioscorea</taxon>
    </lineage>
</organism>
<keyword id="KW-0150">Chloroplast</keyword>
<keyword id="KW-0934">Plastid</keyword>
<keyword id="KW-0687">Ribonucleoprotein</keyword>
<keyword id="KW-0689">Ribosomal protein</keyword>
<keyword id="KW-0694">RNA-binding</keyword>
<keyword id="KW-0699">rRNA-binding</keyword>